<feature type="chain" id="PRO_1000203885" description="1-deoxy-D-xylulose 5-phosphate reductoisomerase">
    <location>
        <begin position="1"/>
        <end position="380"/>
    </location>
</feature>
<feature type="binding site" evidence="1">
    <location>
        <position position="10"/>
    </location>
    <ligand>
        <name>NADPH</name>
        <dbReference type="ChEBI" id="CHEBI:57783"/>
    </ligand>
</feature>
<feature type="binding site" evidence="1">
    <location>
        <position position="11"/>
    </location>
    <ligand>
        <name>NADPH</name>
        <dbReference type="ChEBI" id="CHEBI:57783"/>
    </ligand>
</feature>
<feature type="binding site" evidence="1">
    <location>
        <position position="12"/>
    </location>
    <ligand>
        <name>NADPH</name>
        <dbReference type="ChEBI" id="CHEBI:57783"/>
    </ligand>
</feature>
<feature type="binding site" evidence="1">
    <location>
        <position position="13"/>
    </location>
    <ligand>
        <name>NADPH</name>
        <dbReference type="ChEBI" id="CHEBI:57783"/>
    </ligand>
</feature>
<feature type="binding site" evidence="1">
    <location>
        <position position="35"/>
    </location>
    <ligand>
        <name>NADPH</name>
        <dbReference type="ChEBI" id="CHEBI:57783"/>
    </ligand>
</feature>
<feature type="binding site" evidence="1">
    <location>
        <position position="121"/>
    </location>
    <ligand>
        <name>NADPH</name>
        <dbReference type="ChEBI" id="CHEBI:57783"/>
    </ligand>
</feature>
<feature type="binding site" evidence="1">
    <location>
        <position position="122"/>
    </location>
    <ligand>
        <name>1-deoxy-D-xylulose 5-phosphate</name>
        <dbReference type="ChEBI" id="CHEBI:57792"/>
    </ligand>
</feature>
<feature type="binding site" evidence="1">
    <location>
        <position position="123"/>
    </location>
    <ligand>
        <name>NADPH</name>
        <dbReference type="ChEBI" id="CHEBI:57783"/>
    </ligand>
</feature>
<feature type="binding site" evidence="1">
    <location>
        <position position="147"/>
    </location>
    <ligand>
        <name>Mn(2+)</name>
        <dbReference type="ChEBI" id="CHEBI:29035"/>
    </ligand>
</feature>
<feature type="binding site" evidence="1">
    <location>
        <position position="148"/>
    </location>
    <ligand>
        <name>1-deoxy-D-xylulose 5-phosphate</name>
        <dbReference type="ChEBI" id="CHEBI:57792"/>
    </ligand>
</feature>
<feature type="binding site" evidence="1">
    <location>
        <position position="149"/>
    </location>
    <ligand>
        <name>1-deoxy-D-xylulose 5-phosphate</name>
        <dbReference type="ChEBI" id="CHEBI:57792"/>
    </ligand>
</feature>
<feature type="binding site" evidence="1">
    <location>
        <position position="149"/>
    </location>
    <ligand>
        <name>Mn(2+)</name>
        <dbReference type="ChEBI" id="CHEBI:29035"/>
    </ligand>
</feature>
<feature type="binding site" evidence="1">
    <location>
        <position position="173"/>
    </location>
    <ligand>
        <name>1-deoxy-D-xylulose 5-phosphate</name>
        <dbReference type="ChEBI" id="CHEBI:57792"/>
    </ligand>
</feature>
<feature type="binding site" evidence="1">
    <location>
        <position position="196"/>
    </location>
    <ligand>
        <name>1-deoxy-D-xylulose 5-phosphate</name>
        <dbReference type="ChEBI" id="CHEBI:57792"/>
    </ligand>
</feature>
<feature type="binding site" evidence="1">
    <location>
        <position position="202"/>
    </location>
    <ligand>
        <name>NADPH</name>
        <dbReference type="ChEBI" id="CHEBI:57783"/>
    </ligand>
</feature>
<feature type="binding site" evidence="1">
    <location>
        <position position="209"/>
    </location>
    <ligand>
        <name>1-deoxy-D-xylulose 5-phosphate</name>
        <dbReference type="ChEBI" id="CHEBI:57792"/>
    </ligand>
</feature>
<feature type="binding site" evidence="1">
    <location>
        <position position="214"/>
    </location>
    <ligand>
        <name>1-deoxy-D-xylulose 5-phosphate</name>
        <dbReference type="ChEBI" id="CHEBI:57792"/>
    </ligand>
</feature>
<feature type="binding site" evidence="1">
    <location>
        <position position="215"/>
    </location>
    <ligand>
        <name>1-deoxy-D-xylulose 5-phosphate</name>
        <dbReference type="ChEBI" id="CHEBI:57792"/>
    </ligand>
</feature>
<feature type="binding site" evidence="1">
    <location>
        <position position="218"/>
    </location>
    <ligand>
        <name>1-deoxy-D-xylulose 5-phosphate</name>
        <dbReference type="ChEBI" id="CHEBI:57792"/>
    </ligand>
</feature>
<feature type="binding site" evidence="1">
    <location>
        <position position="218"/>
    </location>
    <ligand>
        <name>Mn(2+)</name>
        <dbReference type="ChEBI" id="CHEBI:29035"/>
    </ligand>
</feature>
<comment type="function">
    <text evidence="1">Catalyzes the NADPH-dependent rearrangement and reduction of 1-deoxy-D-xylulose-5-phosphate (DXP) to 2-C-methyl-D-erythritol 4-phosphate (MEP).</text>
</comment>
<comment type="catalytic activity">
    <reaction evidence="1">
        <text>2-C-methyl-D-erythritol 4-phosphate + NADP(+) = 1-deoxy-D-xylulose 5-phosphate + NADPH + H(+)</text>
        <dbReference type="Rhea" id="RHEA:13717"/>
        <dbReference type="ChEBI" id="CHEBI:15378"/>
        <dbReference type="ChEBI" id="CHEBI:57783"/>
        <dbReference type="ChEBI" id="CHEBI:57792"/>
        <dbReference type="ChEBI" id="CHEBI:58262"/>
        <dbReference type="ChEBI" id="CHEBI:58349"/>
        <dbReference type="EC" id="1.1.1.267"/>
    </reaction>
    <physiologicalReaction direction="right-to-left" evidence="1">
        <dbReference type="Rhea" id="RHEA:13719"/>
    </physiologicalReaction>
</comment>
<comment type="cofactor">
    <cofactor evidence="1">
        <name>Mg(2+)</name>
        <dbReference type="ChEBI" id="CHEBI:18420"/>
    </cofactor>
    <cofactor evidence="1">
        <name>Mn(2+)</name>
        <dbReference type="ChEBI" id="CHEBI:29035"/>
    </cofactor>
</comment>
<comment type="pathway">
    <text evidence="1">Isoprenoid biosynthesis; isopentenyl diphosphate biosynthesis via DXP pathway; isopentenyl diphosphate from 1-deoxy-D-xylulose 5-phosphate: step 1/6.</text>
</comment>
<comment type="similarity">
    <text evidence="1">Belongs to the DXR family.</text>
</comment>
<name>DXR_LACE2</name>
<protein>
    <recommendedName>
        <fullName evidence="1">1-deoxy-D-xylulose 5-phosphate reductoisomerase</fullName>
        <shortName evidence="1">DXP reductoisomerase</shortName>
        <ecNumber evidence="1">1.1.1.267</ecNumber>
    </recommendedName>
    <alternativeName>
        <fullName evidence="1">1-deoxyxylulose-5-phosphate reductoisomerase</fullName>
    </alternativeName>
    <alternativeName>
        <fullName evidence="1">2-C-methyl-D-erythritol 4-phosphate synthase</fullName>
    </alternativeName>
</protein>
<sequence>MKNVSILGSTGSIGTQTLDVIRRNADINVVALAAGTRVSDLAEQVREFKPQLVCIGKEELVPELKTLIGDMDVKIVSGDEGLIEAATIESAEIVVTAVVGMMGITPTVEAIKAHKDIALANKETLVCAGHIIMSLAKECNVNIYPVDSEHSAIFQCLNGERRGEIEKILLTASGGPFRGKKRADLENVQLEDALKHPNWAMGRKITIDSSTMVNKGLEVMEAQWLFGVPAEKVQVIVQPQSIIHSMVEFKDGAVMAQLGSPDMRLPIQYALYYPERRKLNTERLDFYELAKITFEKPDMETFKGLKLAYEAAARGGNIPTALNAANEVAVARFLDRKIKYLDIPDIIEYAMNEVDYINNPTVEQILSTQKIVTDMIESRW</sequence>
<evidence type="ECO:0000255" key="1">
    <source>
        <dbReference type="HAMAP-Rule" id="MF_00183"/>
    </source>
</evidence>
<accession>C4Z5K1</accession>
<dbReference type="EC" id="1.1.1.267" evidence="1"/>
<dbReference type="EMBL" id="CP001104">
    <property type="protein sequence ID" value="ACR71860.1"/>
    <property type="molecule type" value="Genomic_DNA"/>
</dbReference>
<dbReference type="RefSeq" id="WP_012739096.1">
    <property type="nucleotide sequence ID" value="NC_012778.1"/>
</dbReference>
<dbReference type="SMR" id="C4Z5K1"/>
<dbReference type="STRING" id="515620.EUBELI_00852"/>
<dbReference type="GeneID" id="41355590"/>
<dbReference type="KEGG" id="eel:EUBELI_00852"/>
<dbReference type="eggNOG" id="COG0743">
    <property type="taxonomic scope" value="Bacteria"/>
</dbReference>
<dbReference type="HOGENOM" id="CLU_035714_4_0_9"/>
<dbReference type="UniPathway" id="UPA00056">
    <property type="reaction ID" value="UER00092"/>
</dbReference>
<dbReference type="Proteomes" id="UP000001476">
    <property type="component" value="Chromosome"/>
</dbReference>
<dbReference type="GO" id="GO:0030604">
    <property type="term" value="F:1-deoxy-D-xylulose-5-phosphate reductoisomerase activity"/>
    <property type="evidence" value="ECO:0007669"/>
    <property type="project" value="UniProtKB-UniRule"/>
</dbReference>
<dbReference type="GO" id="GO:0030145">
    <property type="term" value="F:manganese ion binding"/>
    <property type="evidence" value="ECO:0007669"/>
    <property type="project" value="TreeGrafter"/>
</dbReference>
<dbReference type="GO" id="GO:0070402">
    <property type="term" value="F:NADPH binding"/>
    <property type="evidence" value="ECO:0007669"/>
    <property type="project" value="InterPro"/>
</dbReference>
<dbReference type="GO" id="GO:0051484">
    <property type="term" value="P:isopentenyl diphosphate biosynthetic process, methylerythritol 4-phosphate pathway involved in terpenoid biosynthetic process"/>
    <property type="evidence" value="ECO:0007669"/>
    <property type="project" value="TreeGrafter"/>
</dbReference>
<dbReference type="FunFam" id="3.40.50.720:FF:000045">
    <property type="entry name" value="1-deoxy-D-xylulose 5-phosphate reductoisomerase"/>
    <property type="match status" value="1"/>
</dbReference>
<dbReference type="Gene3D" id="1.10.1740.10">
    <property type="match status" value="1"/>
</dbReference>
<dbReference type="Gene3D" id="3.40.50.720">
    <property type="entry name" value="NAD(P)-binding Rossmann-like Domain"/>
    <property type="match status" value="1"/>
</dbReference>
<dbReference type="HAMAP" id="MF_00183">
    <property type="entry name" value="DXP_reductoisom"/>
    <property type="match status" value="1"/>
</dbReference>
<dbReference type="InterPro" id="IPR003821">
    <property type="entry name" value="DXP_reductoisomerase"/>
</dbReference>
<dbReference type="InterPro" id="IPR013644">
    <property type="entry name" value="DXP_reductoisomerase_C"/>
</dbReference>
<dbReference type="InterPro" id="IPR013512">
    <property type="entry name" value="DXP_reductoisomerase_N"/>
</dbReference>
<dbReference type="InterPro" id="IPR026877">
    <property type="entry name" value="DXPR_C"/>
</dbReference>
<dbReference type="InterPro" id="IPR036169">
    <property type="entry name" value="DXPR_C_sf"/>
</dbReference>
<dbReference type="InterPro" id="IPR036291">
    <property type="entry name" value="NAD(P)-bd_dom_sf"/>
</dbReference>
<dbReference type="NCBIfam" id="TIGR00243">
    <property type="entry name" value="Dxr"/>
    <property type="match status" value="1"/>
</dbReference>
<dbReference type="NCBIfam" id="NF009114">
    <property type="entry name" value="PRK12464.1"/>
    <property type="match status" value="1"/>
</dbReference>
<dbReference type="PANTHER" id="PTHR30525">
    <property type="entry name" value="1-DEOXY-D-XYLULOSE 5-PHOSPHATE REDUCTOISOMERASE"/>
    <property type="match status" value="1"/>
</dbReference>
<dbReference type="PANTHER" id="PTHR30525:SF0">
    <property type="entry name" value="1-DEOXY-D-XYLULOSE 5-PHOSPHATE REDUCTOISOMERASE, CHLOROPLASTIC"/>
    <property type="match status" value="1"/>
</dbReference>
<dbReference type="Pfam" id="PF08436">
    <property type="entry name" value="DXP_redisom_C"/>
    <property type="match status" value="1"/>
</dbReference>
<dbReference type="Pfam" id="PF02670">
    <property type="entry name" value="DXP_reductoisom"/>
    <property type="match status" value="1"/>
</dbReference>
<dbReference type="Pfam" id="PF13288">
    <property type="entry name" value="DXPR_C"/>
    <property type="match status" value="1"/>
</dbReference>
<dbReference type="PIRSF" id="PIRSF006205">
    <property type="entry name" value="Dxp_reductismrs"/>
    <property type="match status" value="1"/>
</dbReference>
<dbReference type="SUPFAM" id="SSF69055">
    <property type="entry name" value="1-deoxy-D-xylulose-5-phosphate reductoisomerase, C-terminal domain"/>
    <property type="match status" value="1"/>
</dbReference>
<dbReference type="SUPFAM" id="SSF55347">
    <property type="entry name" value="Glyceraldehyde-3-phosphate dehydrogenase-like, C-terminal domain"/>
    <property type="match status" value="1"/>
</dbReference>
<dbReference type="SUPFAM" id="SSF51735">
    <property type="entry name" value="NAD(P)-binding Rossmann-fold domains"/>
    <property type="match status" value="1"/>
</dbReference>
<organism>
    <name type="scientific">Lachnospira eligens (strain ATCC 27750 / DSM 3376 / VPI C15-48 / C15-B4)</name>
    <name type="common">Eubacterium eligens</name>
    <dbReference type="NCBI Taxonomy" id="515620"/>
    <lineage>
        <taxon>Bacteria</taxon>
        <taxon>Bacillati</taxon>
        <taxon>Bacillota</taxon>
        <taxon>Clostridia</taxon>
        <taxon>Lachnospirales</taxon>
        <taxon>Lachnospiraceae</taxon>
        <taxon>Lachnospira</taxon>
    </lineage>
</organism>
<reference key="1">
    <citation type="journal article" date="2009" name="Proc. Natl. Acad. Sci. U.S.A.">
        <title>Characterizing a model human gut microbiota composed of members of its two dominant bacterial phyla.</title>
        <authorList>
            <person name="Mahowald M.A."/>
            <person name="Rey F.E."/>
            <person name="Seedorf H."/>
            <person name="Turnbaugh P.J."/>
            <person name="Fulton R.S."/>
            <person name="Wollam A."/>
            <person name="Shah N."/>
            <person name="Wang C."/>
            <person name="Magrini V."/>
            <person name="Wilson R.K."/>
            <person name="Cantarel B.L."/>
            <person name="Coutinho P.M."/>
            <person name="Henrissat B."/>
            <person name="Crock L.W."/>
            <person name="Russell A."/>
            <person name="Verberkmoes N.C."/>
            <person name="Hettich R.L."/>
            <person name="Gordon J.I."/>
        </authorList>
    </citation>
    <scope>NUCLEOTIDE SEQUENCE [LARGE SCALE GENOMIC DNA]</scope>
    <source>
        <strain>ATCC 27750 / DSM 3376 / VPI C15-48 / C15-B4</strain>
    </source>
</reference>
<proteinExistence type="inferred from homology"/>
<gene>
    <name evidence="1" type="primary">dxr</name>
    <name type="ordered locus">EUBELI_00852</name>
</gene>
<keyword id="KW-0414">Isoprene biosynthesis</keyword>
<keyword id="KW-0464">Manganese</keyword>
<keyword id="KW-0479">Metal-binding</keyword>
<keyword id="KW-0521">NADP</keyword>
<keyword id="KW-0560">Oxidoreductase</keyword>
<keyword id="KW-1185">Reference proteome</keyword>